<accession>P42461</accession>
<evidence type="ECO:0000255" key="1">
    <source>
        <dbReference type="PROSITE-ProRule" id="PRU00303"/>
    </source>
</evidence>
<evidence type="ECO:0000256" key="2">
    <source>
        <dbReference type="SAM" id="MobiDB-lite"/>
    </source>
</evidence>
<comment type="function">
    <text>Is necessary for biosynthesis of the 4-methyl-5-(beta-hydroxyethyl)thiazol component from which thiamine is formed.</text>
</comment>
<comment type="subcellular location">
    <subcellularLocation>
        <location evidence="1">Cell membrane</location>
        <topology evidence="1">Lipid-anchor</topology>
    </subcellularLocation>
</comment>
<feature type="signal peptide" evidence="1">
    <location>
        <begin position="1"/>
        <end position="22"/>
    </location>
</feature>
<feature type="chain" id="PRO_0000022491" description="Thiamine biosynthesis protein X">
    <location>
        <begin position="23"/>
        <end position="190"/>
    </location>
</feature>
<feature type="region of interest" description="Disordered" evidence="2">
    <location>
        <begin position="43"/>
        <end position="68"/>
    </location>
</feature>
<feature type="compositionally biased region" description="Low complexity" evidence="2">
    <location>
        <begin position="47"/>
        <end position="63"/>
    </location>
</feature>
<feature type="lipid moiety-binding region" description="N-palmitoyl cysteine" evidence="1">
    <location>
        <position position="23"/>
    </location>
</feature>
<feature type="lipid moiety-binding region" description="S-diacylglycerol cysteine" evidence="1">
    <location>
        <position position="23"/>
    </location>
</feature>
<protein>
    <recommendedName>
        <fullName>Thiamine biosynthesis protein X</fullName>
    </recommendedName>
</protein>
<keyword id="KW-0002">3D-structure</keyword>
<keyword id="KW-1003">Cell membrane</keyword>
<keyword id="KW-0449">Lipoprotein</keyword>
<keyword id="KW-0472">Membrane</keyword>
<keyword id="KW-0564">Palmitate</keyword>
<keyword id="KW-1185">Reference proteome</keyword>
<keyword id="KW-0732">Signal</keyword>
<keyword id="KW-0784">Thiamine biosynthesis</keyword>
<dbReference type="EMBL" id="BA000036">
    <property type="protein sequence ID" value="BAB99725.1"/>
    <property type="molecule type" value="Genomic_DNA"/>
</dbReference>
<dbReference type="EMBL" id="BX927154">
    <property type="protein sequence ID" value="CAF20675.1"/>
    <property type="molecule type" value="Genomic_DNA"/>
</dbReference>
<dbReference type="EMBL" id="X75504">
    <property type="protein sequence ID" value="CAA53220.1"/>
    <property type="molecule type" value="Genomic_DNA"/>
</dbReference>
<dbReference type="PIR" id="I40714">
    <property type="entry name" value="I40714"/>
</dbReference>
<dbReference type="RefSeq" id="NP_601532.1">
    <property type="nucleotide sequence ID" value="NC_003450.3"/>
</dbReference>
<dbReference type="RefSeq" id="WP_011015045.1">
    <property type="nucleotide sequence ID" value="NC_006958.1"/>
</dbReference>
<dbReference type="PDB" id="7QHM">
    <property type="method" value="EM"/>
    <property type="resolution" value="2.80 A"/>
    <property type="chains" value="M/Z=23-190"/>
</dbReference>
<dbReference type="PDB" id="7QHO">
    <property type="method" value="EM"/>
    <property type="resolution" value="3.10 A"/>
    <property type="chains" value="M/Z=23-190"/>
</dbReference>
<dbReference type="PDBsum" id="7QHM"/>
<dbReference type="PDBsum" id="7QHO"/>
<dbReference type="EMDB" id="EMD-13976"/>
<dbReference type="EMDB" id="EMD-13977"/>
<dbReference type="SMR" id="P42461"/>
<dbReference type="STRING" id="196627.cg2561"/>
<dbReference type="GeneID" id="1020282"/>
<dbReference type="KEGG" id="cgb:cg2561"/>
<dbReference type="KEGG" id="cgl:Cgl2332"/>
<dbReference type="PATRIC" id="fig|196627.13.peg.2265"/>
<dbReference type="eggNOG" id="ENOG5031J0M">
    <property type="taxonomic scope" value="Bacteria"/>
</dbReference>
<dbReference type="HOGENOM" id="CLU_121345_0_0_11"/>
<dbReference type="OrthoDB" id="4427143at2"/>
<dbReference type="BioCyc" id="CORYNE:G18NG-11929-MONOMER"/>
<dbReference type="Proteomes" id="UP000000582">
    <property type="component" value="Chromosome"/>
</dbReference>
<dbReference type="Proteomes" id="UP000001009">
    <property type="component" value="Chromosome"/>
</dbReference>
<dbReference type="GO" id="GO:0005886">
    <property type="term" value="C:plasma membrane"/>
    <property type="evidence" value="ECO:0007669"/>
    <property type="project" value="UniProtKB-SubCell"/>
</dbReference>
<dbReference type="GO" id="GO:0009228">
    <property type="term" value="P:thiamine biosynthetic process"/>
    <property type="evidence" value="ECO:0007669"/>
    <property type="project" value="UniProtKB-KW"/>
</dbReference>
<dbReference type="Gene3D" id="2.60.40.230">
    <property type="entry name" value="Neocarzinostatin-like"/>
    <property type="match status" value="1"/>
</dbReference>
<dbReference type="InterPro" id="IPR027273">
    <property type="entry name" value="Neocarzinostatin-like"/>
</dbReference>
<dbReference type="SUPFAM" id="SSF49319">
    <property type="entry name" value="Actinoxanthin-like"/>
    <property type="match status" value="1"/>
</dbReference>
<dbReference type="PROSITE" id="PS51257">
    <property type="entry name" value="PROKAR_LIPOPROTEIN"/>
    <property type="match status" value="1"/>
</dbReference>
<organism>
    <name type="scientific">Corynebacterium glutamicum (strain ATCC 13032 / DSM 20300 / JCM 1318 / BCRC 11384 / CCUG 27702 / LMG 3730 / NBRC 12168 / NCIMB 10025 / NRRL B-2784 / 534)</name>
    <dbReference type="NCBI Taxonomy" id="196627"/>
    <lineage>
        <taxon>Bacteria</taxon>
        <taxon>Bacillati</taxon>
        <taxon>Actinomycetota</taxon>
        <taxon>Actinomycetes</taxon>
        <taxon>Mycobacteriales</taxon>
        <taxon>Corynebacteriaceae</taxon>
        <taxon>Corynebacterium</taxon>
    </lineage>
</organism>
<proteinExistence type="evidence at protein level"/>
<name>THIX_CORGL</name>
<gene>
    <name type="primary">thiX</name>
    <name type="ordered locus">Cgl2332</name>
    <name type="ordered locus">cg2561</name>
</gene>
<reference key="1">
    <citation type="journal article" date="2003" name="Appl. Microbiol. Biotechnol.">
        <title>The Corynebacterium glutamicum genome: features and impacts on biotechnological processes.</title>
        <authorList>
            <person name="Ikeda M."/>
            <person name="Nakagawa S."/>
        </authorList>
    </citation>
    <scope>NUCLEOTIDE SEQUENCE [LARGE SCALE GENOMIC DNA]</scope>
    <source>
        <strain>ATCC 13032 / DSM 20300 / JCM 1318 / BCRC 11384 / CCUG 27702 / LMG 3730 / NBRC 12168 / NCIMB 10025 / NRRL B-2784 / 534</strain>
    </source>
</reference>
<reference key="2">
    <citation type="journal article" date="2003" name="J. Biotechnol.">
        <title>The complete Corynebacterium glutamicum ATCC 13032 genome sequence and its impact on the production of L-aspartate-derived amino acids and vitamins.</title>
        <authorList>
            <person name="Kalinowski J."/>
            <person name="Bathe B."/>
            <person name="Bartels D."/>
            <person name="Bischoff N."/>
            <person name="Bott M."/>
            <person name="Burkovski A."/>
            <person name="Dusch N."/>
            <person name="Eggeling L."/>
            <person name="Eikmanns B.J."/>
            <person name="Gaigalat L."/>
            <person name="Goesmann A."/>
            <person name="Hartmann M."/>
            <person name="Huthmacher K."/>
            <person name="Kraemer R."/>
            <person name="Linke B."/>
            <person name="McHardy A.C."/>
            <person name="Meyer F."/>
            <person name="Moeckel B."/>
            <person name="Pfefferle W."/>
            <person name="Puehler A."/>
            <person name="Rey D.A."/>
            <person name="Rueckert C."/>
            <person name="Rupp O."/>
            <person name="Sahm H."/>
            <person name="Wendisch V.F."/>
            <person name="Wiegraebe I."/>
            <person name="Tauch A."/>
        </authorList>
    </citation>
    <scope>NUCLEOTIDE SEQUENCE [LARGE SCALE GENOMIC DNA]</scope>
    <source>
        <strain>ATCC 13032 / DSM 20300 / JCM 1318 / BCRC 11384 / CCUG 27702 / LMG 3730 / NBRC 12168 / NCIMB 10025 / NRRL B-2784 / 534</strain>
    </source>
</reference>
<reference key="3">
    <citation type="journal article" date="1994" name="J. Bacteriol.">
        <title>Characterization of the isocitrate lyase gene from Corynebacterium glutamicum and biochemical analysis of the enzyme.</title>
        <authorList>
            <person name="Reinscheid D.J."/>
            <person name="Eikmanns B.J."/>
            <person name="Sahm H."/>
        </authorList>
    </citation>
    <scope>NUCLEOTIDE SEQUENCE [GENOMIC DNA] OF 1-133</scope>
    <source>
        <strain>ATCC 13032 / DSM 20300 / JCM 1318 / BCRC 11384 / CCUG 27702 / LMG 3730 / NBRC 12168 / NCIMB 10025 / NRRL B-2784 / 534</strain>
    </source>
</reference>
<sequence length="190" mass="19251">MSISRTVFGIAATAALSAALVACSPPHQQDSPVQRTNEILTTSQNPTSASSTSTSSATTTSSAPVEEDVEIVVSPAALVDGEQVTFEISGLDPEGGYYAAICDSVANPGNPVPSCTGEMADFTSQAWLSNSQPGATVEIAEDGTATVELEATATGTGLDCTTQACVAKVFGDHTEGFRDVAEVPVTFAAA</sequence>